<keyword id="KW-0997">Cell inner membrane</keyword>
<keyword id="KW-1003">Cell membrane</keyword>
<keyword id="KW-0285">Flavoprotein</keyword>
<keyword id="KW-0288">FMN</keyword>
<keyword id="KW-0472">Membrane</keyword>
<keyword id="KW-0560">Oxidoreductase</keyword>
<protein>
    <recommendedName>
        <fullName evidence="1">L-lactate dehydrogenase</fullName>
        <ecNumber evidence="1">1.1.-.-</ecNumber>
    </recommendedName>
</protein>
<reference key="1">
    <citation type="journal article" date="2004" name="Nat. Genet.">
        <title>Comparison of genome degradation in Paratyphi A and Typhi, human-restricted serovars of Salmonella enterica that cause typhoid.</title>
        <authorList>
            <person name="McClelland M."/>
            <person name="Sanderson K.E."/>
            <person name="Clifton S.W."/>
            <person name="Latreille P."/>
            <person name="Porwollik S."/>
            <person name="Sabo A."/>
            <person name="Meyer R."/>
            <person name="Bieri T."/>
            <person name="Ozersky P."/>
            <person name="McLellan M."/>
            <person name="Harkins C.R."/>
            <person name="Wang C."/>
            <person name="Nguyen C."/>
            <person name="Berghoff A."/>
            <person name="Elliott G."/>
            <person name="Kohlberg S."/>
            <person name="Strong C."/>
            <person name="Du F."/>
            <person name="Carter J."/>
            <person name="Kremizki C."/>
            <person name="Layman D."/>
            <person name="Leonard S."/>
            <person name="Sun H."/>
            <person name="Fulton L."/>
            <person name="Nash W."/>
            <person name="Miner T."/>
            <person name="Minx P."/>
            <person name="Delehaunty K."/>
            <person name="Fronick C."/>
            <person name="Magrini V."/>
            <person name="Nhan M."/>
            <person name="Warren W."/>
            <person name="Florea L."/>
            <person name="Spieth J."/>
            <person name="Wilson R.K."/>
        </authorList>
    </citation>
    <scope>NUCLEOTIDE SEQUENCE [LARGE SCALE GENOMIC DNA]</scope>
    <source>
        <strain>ATCC 9150 / SARB42</strain>
    </source>
</reference>
<proteinExistence type="inferred from homology"/>
<gene>
    <name evidence="1" type="primary">lldD</name>
    <name type="synonym">lctD</name>
    <name type="ordered locus">SPA3546</name>
</gene>
<accession>Q5PLQ7</accession>
<dbReference type="EC" id="1.1.-.-" evidence="1"/>
<dbReference type="EMBL" id="CP000026">
    <property type="protein sequence ID" value="AAV79347.1"/>
    <property type="molecule type" value="Genomic_DNA"/>
</dbReference>
<dbReference type="RefSeq" id="WP_000586998.1">
    <property type="nucleotide sequence ID" value="NC_006511.1"/>
</dbReference>
<dbReference type="SMR" id="Q5PLQ7"/>
<dbReference type="KEGG" id="spt:SPA3546"/>
<dbReference type="HOGENOM" id="CLU_020639_0_0_6"/>
<dbReference type="Proteomes" id="UP000008185">
    <property type="component" value="Chromosome"/>
</dbReference>
<dbReference type="GO" id="GO:0005886">
    <property type="term" value="C:plasma membrane"/>
    <property type="evidence" value="ECO:0007669"/>
    <property type="project" value="UniProtKB-SubCell"/>
</dbReference>
<dbReference type="GO" id="GO:0010181">
    <property type="term" value="F:FMN binding"/>
    <property type="evidence" value="ECO:0007669"/>
    <property type="project" value="InterPro"/>
</dbReference>
<dbReference type="GO" id="GO:0004459">
    <property type="term" value="F:L-lactate dehydrogenase activity"/>
    <property type="evidence" value="ECO:0007669"/>
    <property type="project" value="UniProtKB-UniRule"/>
</dbReference>
<dbReference type="GO" id="GO:0009060">
    <property type="term" value="P:aerobic respiration"/>
    <property type="evidence" value="ECO:0007669"/>
    <property type="project" value="TreeGrafter"/>
</dbReference>
<dbReference type="GO" id="GO:0006089">
    <property type="term" value="P:lactate metabolic process"/>
    <property type="evidence" value="ECO:0007669"/>
    <property type="project" value="UniProtKB-UniRule"/>
</dbReference>
<dbReference type="CDD" id="cd02809">
    <property type="entry name" value="alpha_hydroxyacid_oxid_FMN"/>
    <property type="match status" value="1"/>
</dbReference>
<dbReference type="FunFam" id="3.20.20.70:FF:000029">
    <property type="entry name" value="L-lactate dehydrogenase"/>
    <property type="match status" value="1"/>
</dbReference>
<dbReference type="Gene3D" id="3.20.20.70">
    <property type="entry name" value="Aldolase class I"/>
    <property type="match status" value="1"/>
</dbReference>
<dbReference type="HAMAP" id="MF_01559">
    <property type="entry name" value="L_lact_dehydr"/>
    <property type="match status" value="1"/>
</dbReference>
<dbReference type="InterPro" id="IPR013785">
    <property type="entry name" value="Aldolase_TIM"/>
</dbReference>
<dbReference type="InterPro" id="IPR012133">
    <property type="entry name" value="Alpha-hydoxy_acid_DH_FMN"/>
</dbReference>
<dbReference type="InterPro" id="IPR000262">
    <property type="entry name" value="FMN-dep_DH"/>
</dbReference>
<dbReference type="InterPro" id="IPR037396">
    <property type="entry name" value="FMN_HAD"/>
</dbReference>
<dbReference type="InterPro" id="IPR008259">
    <property type="entry name" value="FMN_hydac_DH_AS"/>
</dbReference>
<dbReference type="InterPro" id="IPR020920">
    <property type="entry name" value="LldD"/>
</dbReference>
<dbReference type="NCBIfam" id="NF033901">
    <property type="entry name" value="L_lactate_LldD"/>
    <property type="match status" value="1"/>
</dbReference>
<dbReference type="NCBIfam" id="NF008398">
    <property type="entry name" value="PRK11197.1"/>
    <property type="match status" value="1"/>
</dbReference>
<dbReference type="PANTHER" id="PTHR10578:SF85">
    <property type="entry name" value="L-LACTATE DEHYDROGENASE"/>
    <property type="match status" value="1"/>
</dbReference>
<dbReference type="PANTHER" id="PTHR10578">
    <property type="entry name" value="S -2-HYDROXY-ACID OXIDASE-RELATED"/>
    <property type="match status" value="1"/>
</dbReference>
<dbReference type="Pfam" id="PF01070">
    <property type="entry name" value="FMN_dh"/>
    <property type="match status" value="1"/>
</dbReference>
<dbReference type="PIRSF" id="PIRSF000138">
    <property type="entry name" value="Al-hdrx_acd_dh"/>
    <property type="match status" value="1"/>
</dbReference>
<dbReference type="SUPFAM" id="SSF51395">
    <property type="entry name" value="FMN-linked oxidoreductases"/>
    <property type="match status" value="1"/>
</dbReference>
<dbReference type="PROSITE" id="PS00557">
    <property type="entry name" value="FMN_HYDROXY_ACID_DH_1"/>
    <property type="match status" value="1"/>
</dbReference>
<dbReference type="PROSITE" id="PS51349">
    <property type="entry name" value="FMN_HYDROXY_ACID_DH_2"/>
    <property type="match status" value="1"/>
</dbReference>
<evidence type="ECO:0000255" key="1">
    <source>
        <dbReference type="HAMAP-Rule" id="MF_01559"/>
    </source>
</evidence>
<sequence>MIISAASDYRAAAQRTLPPFLFHYIDGGAYAEYTLRRNVEDLSQVALRQRVLKNMSDLSLETTLFNETLSMPVALAPVGLCGMYARRGEVQAAAAADAKGIPFTLSTVSVCPIEEVAPTIQRPMWFQLYVLRDRGFMRNALERAKAAGCSTLVFTVDMPTPGARYRDAHSGMSGPNAAMRRYWQAVMHPKWAWDVGLNGRPHDLGNISAYLGKPTGLEDYIGWLANNFDPSISWKDLEWIREFWDGPMVIKGILDPEDARDAVRFGADGIVVSNHGGRQLDGVLSSARALPAIADAVKGDIAILADSGIRNGLDVVRMIALGADTVLLGRAYLYALATAGKAGVANLLDLVEKEMKVAMTLTGAKSISEISGDSLVQELGKSLPAALAPMSKGDAA</sequence>
<organism>
    <name type="scientific">Salmonella paratyphi A (strain ATCC 9150 / SARB42)</name>
    <dbReference type="NCBI Taxonomy" id="295319"/>
    <lineage>
        <taxon>Bacteria</taxon>
        <taxon>Pseudomonadati</taxon>
        <taxon>Pseudomonadota</taxon>
        <taxon>Gammaproteobacteria</taxon>
        <taxon>Enterobacterales</taxon>
        <taxon>Enterobacteriaceae</taxon>
        <taxon>Salmonella</taxon>
    </lineage>
</organism>
<comment type="function">
    <text evidence="1">Catalyzes the conversion of L-lactate to pyruvate. Is coupled to the respiratory chain.</text>
</comment>
<comment type="catalytic activity">
    <reaction evidence="1">
        <text>(S)-lactate + A = pyruvate + AH2</text>
        <dbReference type="Rhea" id="RHEA:45816"/>
        <dbReference type="ChEBI" id="CHEBI:13193"/>
        <dbReference type="ChEBI" id="CHEBI:15361"/>
        <dbReference type="ChEBI" id="CHEBI:16651"/>
        <dbReference type="ChEBI" id="CHEBI:17499"/>
    </reaction>
</comment>
<comment type="cofactor">
    <cofactor evidence="1">
        <name>FMN</name>
        <dbReference type="ChEBI" id="CHEBI:58210"/>
    </cofactor>
</comment>
<comment type="subcellular location">
    <subcellularLocation>
        <location evidence="1">Cell inner membrane</location>
        <topology evidence="1">Peripheral membrane protein</topology>
    </subcellularLocation>
</comment>
<comment type="similarity">
    <text evidence="1">Belongs to the FMN-dependent alpha-hydroxy acid dehydrogenase family.</text>
</comment>
<name>LLDD_SALPA</name>
<feature type="chain" id="PRO_0000206345" description="L-lactate dehydrogenase">
    <location>
        <begin position="1"/>
        <end position="396"/>
    </location>
</feature>
<feature type="domain" description="FMN hydroxy acid dehydrogenase" evidence="1">
    <location>
        <begin position="1"/>
        <end position="380"/>
    </location>
</feature>
<feature type="active site" description="Proton acceptor" evidence="1">
    <location>
        <position position="275"/>
    </location>
</feature>
<feature type="binding site" evidence="1">
    <location>
        <position position="24"/>
    </location>
    <ligand>
        <name>substrate</name>
    </ligand>
</feature>
<feature type="binding site" evidence="1">
    <location>
        <position position="106"/>
    </location>
    <ligand>
        <name>FMN</name>
        <dbReference type="ChEBI" id="CHEBI:58210"/>
    </ligand>
</feature>
<feature type="binding site" evidence="1">
    <location>
        <position position="127"/>
    </location>
    <ligand>
        <name>FMN</name>
        <dbReference type="ChEBI" id="CHEBI:58210"/>
    </ligand>
</feature>
<feature type="binding site" evidence="1">
    <location>
        <position position="129"/>
    </location>
    <ligand>
        <name>substrate</name>
    </ligand>
</feature>
<feature type="binding site" evidence="1">
    <location>
        <position position="155"/>
    </location>
    <ligand>
        <name>FMN</name>
        <dbReference type="ChEBI" id="CHEBI:58210"/>
    </ligand>
</feature>
<feature type="binding site" evidence="1">
    <location>
        <position position="164"/>
    </location>
    <ligand>
        <name>substrate</name>
    </ligand>
</feature>
<feature type="binding site" evidence="1">
    <location>
        <position position="251"/>
    </location>
    <ligand>
        <name>FMN</name>
        <dbReference type="ChEBI" id="CHEBI:58210"/>
    </ligand>
</feature>
<feature type="binding site" evidence="1">
    <location>
        <position position="278"/>
    </location>
    <ligand>
        <name>substrate</name>
    </ligand>
</feature>
<feature type="binding site" evidence="1">
    <location>
        <begin position="306"/>
        <end position="330"/>
    </location>
    <ligand>
        <name>FMN</name>
        <dbReference type="ChEBI" id="CHEBI:58210"/>
    </ligand>
</feature>